<feature type="chain" id="PRO_0000326984" description="Protoheme IX farnesyltransferase">
    <location>
        <begin position="1"/>
        <end position="310"/>
    </location>
</feature>
<feature type="transmembrane region" description="Helical" evidence="1">
    <location>
        <begin position="30"/>
        <end position="47"/>
    </location>
</feature>
<feature type="transmembrane region" description="Helical" evidence="1">
    <location>
        <begin position="50"/>
        <end position="70"/>
    </location>
</feature>
<feature type="transmembrane region" description="Helical" evidence="1">
    <location>
        <begin position="102"/>
        <end position="122"/>
    </location>
</feature>
<feature type="transmembrane region" description="Helical" evidence="1">
    <location>
        <begin position="126"/>
        <end position="146"/>
    </location>
</feature>
<feature type="transmembrane region" description="Helical" evidence="1">
    <location>
        <begin position="152"/>
        <end position="172"/>
    </location>
</feature>
<feature type="transmembrane region" description="Helical" evidence="1">
    <location>
        <begin position="181"/>
        <end position="201"/>
    </location>
</feature>
<feature type="transmembrane region" description="Helical" evidence="1">
    <location>
        <begin position="228"/>
        <end position="248"/>
    </location>
</feature>
<feature type="transmembrane region" description="Helical" evidence="1">
    <location>
        <begin position="251"/>
        <end position="271"/>
    </location>
</feature>
<feature type="transmembrane region" description="Helical" evidence="1">
    <location>
        <begin position="286"/>
        <end position="306"/>
    </location>
</feature>
<proteinExistence type="inferred from homology"/>
<protein>
    <recommendedName>
        <fullName evidence="1">Protoheme IX farnesyltransferase</fullName>
        <ecNumber evidence="1">2.5.1.141</ecNumber>
    </recommendedName>
    <alternativeName>
        <fullName evidence="1">Heme B farnesyltransferase</fullName>
    </alternativeName>
    <alternativeName>
        <fullName evidence="1">Heme O synthase</fullName>
    </alternativeName>
</protein>
<comment type="function">
    <text evidence="1">Converts heme B (protoheme IX) to heme O by substitution of the vinyl group on carbon 2 of heme B porphyrin ring with a hydroxyethyl farnesyl side group.</text>
</comment>
<comment type="catalytic activity">
    <reaction evidence="1">
        <text>heme b + (2E,6E)-farnesyl diphosphate + H2O = Fe(II)-heme o + diphosphate</text>
        <dbReference type="Rhea" id="RHEA:28070"/>
        <dbReference type="ChEBI" id="CHEBI:15377"/>
        <dbReference type="ChEBI" id="CHEBI:33019"/>
        <dbReference type="ChEBI" id="CHEBI:60344"/>
        <dbReference type="ChEBI" id="CHEBI:60530"/>
        <dbReference type="ChEBI" id="CHEBI:175763"/>
        <dbReference type="EC" id="2.5.1.141"/>
    </reaction>
</comment>
<comment type="pathway">
    <text evidence="1">Porphyrin-containing compound metabolism; heme O biosynthesis; heme O from protoheme: step 1/1.</text>
</comment>
<comment type="subcellular location">
    <subcellularLocation>
        <location evidence="1">Cell inner membrane</location>
        <topology evidence="1">Multi-pass membrane protein</topology>
    </subcellularLocation>
</comment>
<comment type="miscellaneous">
    <text evidence="1">Carbon 2 of the heme B porphyrin ring is defined according to the Fischer nomenclature.</text>
</comment>
<comment type="similarity">
    <text evidence="1">Belongs to the UbiA prenyltransferase family. Protoheme IX farnesyltransferase subfamily.</text>
</comment>
<reference key="1">
    <citation type="journal article" date="2009" name="Appl. Environ. Microbiol.">
        <title>Three genomes from the phylum Acidobacteria provide insight into the lifestyles of these microorganisms in soils.</title>
        <authorList>
            <person name="Ward N.L."/>
            <person name="Challacombe J.F."/>
            <person name="Janssen P.H."/>
            <person name="Henrissat B."/>
            <person name="Coutinho P.M."/>
            <person name="Wu M."/>
            <person name="Xie G."/>
            <person name="Haft D.H."/>
            <person name="Sait M."/>
            <person name="Badger J."/>
            <person name="Barabote R.D."/>
            <person name="Bradley B."/>
            <person name="Brettin T.S."/>
            <person name="Brinkac L.M."/>
            <person name="Bruce D."/>
            <person name="Creasy T."/>
            <person name="Daugherty S.C."/>
            <person name="Davidsen T.M."/>
            <person name="DeBoy R.T."/>
            <person name="Detter J.C."/>
            <person name="Dodson R.J."/>
            <person name="Durkin A.S."/>
            <person name="Ganapathy A."/>
            <person name="Gwinn-Giglio M."/>
            <person name="Han C.S."/>
            <person name="Khouri H."/>
            <person name="Kiss H."/>
            <person name="Kothari S.P."/>
            <person name="Madupu R."/>
            <person name="Nelson K.E."/>
            <person name="Nelson W.C."/>
            <person name="Paulsen I."/>
            <person name="Penn K."/>
            <person name="Ren Q."/>
            <person name="Rosovitz M.J."/>
            <person name="Selengut J.D."/>
            <person name="Shrivastava S."/>
            <person name="Sullivan S.A."/>
            <person name="Tapia R."/>
            <person name="Thompson L.S."/>
            <person name="Watkins K.L."/>
            <person name="Yang Q."/>
            <person name="Yu C."/>
            <person name="Zafar N."/>
            <person name="Zhou L."/>
            <person name="Kuske C.R."/>
        </authorList>
    </citation>
    <scope>NUCLEOTIDE SEQUENCE [LARGE SCALE GENOMIC DNA]</scope>
    <source>
        <strain>Ellin345</strain>
    </source>
</reference>
<keyword id="KW-0997">Cell inner membrane</keyword>
<keyword id="KW-1003">Cell membrane</keyword>
<keyword id="KW-0350">Heme biosynthesis</keyword>
<keyword id="KW-0472">Membrane</keyword>
<keyword id="KW-1185">Reference proteome</keyword>
<keyword id="KW-0808">Transferase</keyword>
<keyword id="KW-0812">Transmembrane</keyword>
<keyword id="KW-1133">Transmembrane helix</keyword>
<dbReference type="EC" id="2.5.1.141" evidence="1"/>
<dbReference type="EMBL" id="CP000360">
    <property type="protein sequence ID" value="ABF41219.1"/>
    <property type="molecule type" value="Genomic_DNA"/>
</dbReference>
<dbReference type="RefSeq" id="WP_011523020.1">
    <property type="nucleotide sequence ID" value="NC_008009.1"/>
</dbReference>
<dbReference type="SMR" id="Q1IPI1"/>
<dbReference type="STRING" id="204669.Acid345_2218"/>
<dbReference type="EnsemblBacteria" id="ABF41219">
    <property type="protein sequence ID" value="ABF41219"/>
    <property type="gene ID" value="Acid345_2218"/>
</dbReference>
<dbReference type="KEGG" id="aba:Acid345_2218"/>
<dbReference type="eggNOG" id="COG0109">
    <property type="taxonomic scope" value="Bacteria"/>
</dbReference>
<dbReference type="HOGENOM" id="CLU_029631_3_2_0"/>
<dbReference type="OrthoDB" id="9814417at2"/>
<dbReference type="UniPathway" id="UPA00834">
    <property type="reaction ID" value="UER00712"/>
</dbReference>
<dbReference type="Proteomes" id="UP000002432">
    <property type="component" value="Chromosome"/>
</dbReference>
<dbReference type="GO" id="GO:0005886">
    <property type="term" value="C:plasma membrane"/>
    <property type="evidence" value="ECO:0007669"/>
    <property type="project" value="UniProtKB-SubCell"/>
</dbReference>
<dbReference type="GO" id="GO:0008495">
    <property type="term" value="F:protoheme IX farnesyltransferase activity"/>
    <property type="evidence" value="ECO:0007669"/>
    <property type="project" value="UniProtKB-UniRule"/>
</dbReference>
<dbReference type="GO" id="GO:0048034">
    <property type="term" value="P:heme O biosynthetic process"/>
    <property type="evidence" value="ECO:0007669"/>
    <property type="project" value="UniProtKB-UniRule"/>
</dbReference>
<dbReference type="CDD" id="cd13957">
    <property type="entry name" value="PT_UbiA_Cox10"/>
    <property type="match status" value="1"/>
</dbReference>
<dbReference type="Gene3D" id="1.10.357.140">
    <property type="entry name" value="UbiA prenyltransferase"/>
    <property type="match status" value="1"/>
</dbReference>
<dbReference type="HAMAP" id="MF_00154">
    <property type="entry name" value="CyoE_CtaB"/>
    <property type="match status" value="1"/>
</dbReference>
<dbReference type="InterPro" id="IPR006369">
    <property type="entry name" value="Protohaem_IX_farnesylTrfase"/>
</dbReference>
<dbReference type="InterPro" id="IPR000537">
    <property type="entry name" value="UbiA_prenyltransferase"/>
</dbReference>
<dbReference type="InterPro" id="IPR044878">
    <property type="entry name" value="UbiA_sf"/>
</dbReference>
<dbReference type="NCBIfam" id="TIGR01473">
    <property type="entry name" value="cyoE_ctaB"/>
    <property type="match status" value="1"/>
</dbReference>
<dbReference type="PANTHER" id="PTHR43448:SF7">
    <property type="entry name" value="4-HYDROXYBENZOATE SOLANESYLTRANSFERASE"/>
    <property type="match status" value="1"/>
</dbReference>
<dbReference type="PANTHER" id="PTHR43448">
    <property type="entry name" value="PROTOHEME IX FARNESYLTRANSFERASE, MITOCHONDRIAL"/>
    <property type="match status" value="1"/>
</dbReference>
<dbReference type="Pfam" id="PF01040">
    <property type="entry name" value="UbiA"/>
    <property type="match status" value="1"/>
</dbReference>
<organism>
    <name type="scientific">Koribacter versatilis (strain Ellin345)</name>
    <dbReference type="NCBI Taxonomy" id="204669"/>
    <lineage>
        <taxon>Bacteria</taxon>
        <taxon>Pseudomonadati</taxon>
        <taxon>Acidobacteriota</taxon>
        <taxon>Terriglobia</taxon>
        <taxon>Terriglobales</taxon>
        <taxon>Candidatus Korobacteraceae</taxon>
        <taxon>Candidatus Korobacter</taxon>
    </lineage>
</organism>
<name>COXX_KORVE</name>
<gene>
    <name evidence="1" type="primary">ctaB</name>
    <name type="ordered locus">Acid345_2218</name>
</gene>
<sequence>MSSVTQPLAVPRPGVASLLRDYSELTKARVTTLIVMTAWTGAFFGAAKSGLPLVSWTLFHALLGIGLVSGGTAAMNEVIERESDARMRRTAIRPLVTGSMSLGHGMVVSLVMMIGGAGYLGLMTNWLTAALALMTSVVYLMAYTPLKKIHPICTTIGAFPGAMPPVLGWTAIRGHLGWEAVALFAILFFWQFPHFHSIAWLYRDDYANAGIRMLPVVERDGRSTAREIVIYAAFLLPITLTPFLLRFAGRIYFLAALVLGSMLFWVSLRMFTMNLAPSSPHSKKYARQLLLASVTYLPLLFAVMMLDRTI</sequence>
<accession>Q1IPI1</accession>
<evidence type="ECO:0000255" key="1">
    <source>
        <dbReference type="HAMAP-Rule" id="MF_00154"/>
    </source>
</evidence>